<keyword id="KW-0067">ATP-binding</keyword>
<keyword id="KW-0418">Kinase</keyword>
<keyword id="KW-0547">Nucleotide-binding</keyword>
<keyword id="KW-0597">Phosphoprotein</keyword>
<keyword id="KW-1185">Reference proteome</keyword>
<keyword id="KW-0723">Serine/threonine-protein kinase</keyword>
<keyword id="KW-0808">Transferase</keyword>
<reference key="1">
    <citation type="submission" date="1996-12" db="EMBL/GenBank/DDBJ databases">
        <authorList>
            <person name="Lessard P."/>
            <person name="Petit-Jean X."/>
            <person name="Bouly J.P."/>
            <person name="Kreis M."/>
            <person name="Thomas M."/>
        </authorList>
    </citation>
    <scope>NUCLEOTIDE SEQUENCE [GENOMIC DNA] OF 1-291</scope>
    <source>
        <strain>cv. Columbia</strain>
    </source>
</reference>
<reference key="2">
    <citation type="journal article" date="1998" name="DNA Res.">
        <title>Structural analysis of Arabidopsis thaliana chromosome 5. IV. Sequence features of the regions of 1,456,315 bp covered by nineteen physically assigned P1 and TAC clones.</title>
        <authorList>
            <person name="Sato S."/>
            <person name="Kaneko T."/>
            <person name="Kotani H."/>
            <person name="Nakamura Y."/>
            <person name="Asamizu E."/>
            <person name="Miyajima N."/>
            <person name="Tabata S."/>
        </authorList>
    </citation>
    <scope>NUCLEOTIDE SEQUENCE [LARGE SCALE GENOMIC DNA]</scope>
    <source>
        <strain>cv. Columbia</strain>
    </source>
</reference>
<reference key="3">
    <citation type="journal article" date="2017" name="Plant J.">
        <title>Araport11: a complete reannotation of the Arabidopsis thaliana reference genome.</title>
        <authorList>
            <person name="Cheng C.Y."/>
            <person name="Krishnakumar V."/>
            <person name="Chan A.P."/>
            <person name="Thibaud-Nissen F."/>
            <person name="Schobel S."/>
            <person name="Town C.D."/>
        </authorList>
    </citation>
    <scope>GENOME REANNOTATION</scope>
    <source>
        <strain>cv. Columbia</strain>
    </source>
</reference>
<reference key="4">
    <citation type="journal article" date="2003" name="Plant Physiol.">
        <title>The Arabidopsis CDPK-SnRK superfamily of protein kinases.</title>
        <authorList>
            <person name="Hrabak E.M."/>
            <person name="Chan C.W.M."/>
            <person name="Gribskov M."/>
            <person name="Harper J.F."/>
            <person name="Choi J.H."/>
            <person name="Halford N."/>
            <person name="Kudla J."/>
            <person name="Luan S."/>
            <person name="Nimmo H.G."/>
            <person name="Sussman M.R."/>
            <person name="Thomas M."/>
            <person name="Walker-Simmons K."/>
            <person name="Zhu J.-K."/>
            <person name="Harmon A.C."/>
        </authorList>
    </citation>
    <scope>GENE FAMILY</scope>
    <scope>NOMENCLATURE</scope>
</reference>
<reference key="5">
    <citation type="journal article" date="1999" name="Proc. Natl. Acad. Sci. U.S.A.">
        <title>Regulatory interaction of PRL1 WD protein with Arabidopsis SNF1-like protein kinases.</title>
        <authorList>
            <person name="Bhalerao R.P."/>
            <person name="Salchert K."/>
            <person name="Bako L."/>
            <person name="Oekresz L."/>
            <person name="Szabados L."/>
            <person name="Muranaka T."/>
            <person name="Machida Y."/>
            <person name="Schell J."/>
            <person name="Koncz C."/>
        </authorList>
    </citation>
    <scope>IDENTIFICATION</scope>
</reference>
<reference key="6">
    <citation type="journal article" date="2007" name="Nature">
        <title>A central integrator of transcription networks in plant stress and energy signalling.</title>
        <authorList>
            <person name="Baena-Gonzalez E."/>
            <person name="Rolland F."/>
            <person name="Thevelein J.M."/>
            <person name="Sheen J."/>
        </authorList>
    </citation>
    <scope>IDENTIFICATION</scope>
    <scope>TISSUE SPECIFICITY</scope>
</reference>
<reference key="7">
    <citation type="journal article" date="2007" name="Trends Plant Sci.">
        <title>SNF1/AMPK/SnRK1 kinases, global regulators at the heart of energy control?</title>
        <authorList>
            <person name="Polge C."/>
            <person name="Thomas M."/>
        </authorList>
    </citation>
    <scope>REVIEW</scope>
</reference>
<proteinExistence type="evidence at transcript level"/>
<gene>
    <name evidence="8" type="primary">KIN12</name>
    <name evidence="6" type="synonym">AKIN12</name>
    <name evidence="7" type="synonym">KIN30</name>
    <name evidence="7" type="synonym">SNRK1.3</name>
    <name evidence="10" type="ordered locus">At5g39440</name>
    <name evidence="11" type="ORF">MUL8.12</name>
</gene>
<accession>Q9FLZ3</accession>
<accession>Q9ZRA0</accession>
<comment type="function">
    <text evidence="1">Catalytic subunit of the probable trimeric SNF1-related protein kinase (SnRK) complex, a central regulator of cellular energy homeostasis, which, in response to seemingly unrelated darkness, sugar and stress conditions, activates energy-producing pathways and inhibits energy-consuming processes. May also be involved in the regulation of fatty acid synthesis by phosphorylation of acetyl-CoA carboxylase and in assimilation of nitrogen by phosphorylating nitrate reductase.</text>
</comment>
<comment type="catalytic activity">
    <reaction evidence="9">
        <text>L-seryl-[protein] + ATP = O-phospho-L-seryl-[protein] + ADP + H(+)</text>
        <dbReference type="Rhea" id="RHEA:17989"/>
        <dbReference type="Rhea" id="RHEA-COMP:9863"/>
        <dbReference type="Rhea" id="RHEA-COMP:11604"/>
        <dbReference type="ChEBI" id="CHEBI:15378"/>
        <dbReference type="ChEBI" id="CHEBI:29999"/>
        <dbReference type="ChEBI" id="CHEBI:30616"/>
        <dbReference type="ChEBI" id="CHEBI:83421"/>
        <dbReference type="ChEBI" id="CHEBI:456216"/>
        <dbReference type="EC" id="2.7.11.1"/>
    </reaction>
</comment>
<comment type="catalytic activity">
    <reaction evidence="9">
        <text>L-threonyl-[protein] + ATP = O-phospho-L-threonyl-[protein] + ADP + H(+)</text>
        <dbReference type="Rhea" id="RHEA:46608"/>
        <dbReference type="Rhea" id="RHEA-COMP:11060"/>
        <dbReference type="Rhea" id="RHEA-COMP:11605"/>
        <dbReference type="ChEBI" id="CHEBI:15378"/>
        <dbReference type="ChEBI" id="CHEBI:30013"/>
        <dbReference type="ChEBI" id="CHEBI:30616"/>
        <dbReference type="ChEBI" id="CHEBI:61977"/>
        <dbReference type="ChEBI" id="CHEBI:456216"/>
        <dbReference type="EC" id="2.7.11.1"/>
    </reaction>
</comment>
<comment type="activity regulation">
    <text evidence="1">Activated by phosphorylation at Thr-175.</text>
</comment>
<comment type="subunit">
    <text evidence="1">Subunit of a probable heterotrimeric complex consisting of an alpha catalytic subunit, and a beta (KINB) and a gamma (KING or SNF4) non-catalytic regulatory subunits.</text>
</comment>
<comment type="tissue specificity">
    <text evidence="5">Expressed at very low levels.</text>
</comment>
<comment type="domain">
    <text evidence="1">The regulatory domain (RD) contains the auto-inhibitory domain (AID) that inhibits kinase activity of the protein kinase domain (KD).</text>
</comment>
<comment type="domain">
    <text evidence="1">The PPI motif mediates the interaction with the ABI (abscisic acid-insensitive) phosphatases.</text>
</comment>
<comment type="PTM">
    <text evidence="1">Autophosphorylated.</text>
</comment>
<comment type="similarity">
    <text evidence="9">Belongs to the protein kinase superfamily. CAMK Ser/Thr protein kinase family. SNF1 subfamily.</text>
</comment>
<dbReference type="EC" id="2.7.11.1" evidence="9"/>
<dbReference type="EMBL" id="U83177">
    <property type="protein sequence ID" value="AAD00542.1"/>
    <property type="molecule type" value="Genomic_DNA"/>
</dbReference>
<dbReference type="EMBL" id="AB009054">
    <property type="protein sequence ID" value="BAB11017.1"/>
    <property type="molecule type" value="Genomic_DNA"/>
</dbReference>
<dbReference type="EMBL" id="CP002688">
    <property type="protein sequence ID" value="AED94433.1"/>
    <property type="molecule type" value="Genomic_DNA"/>
</dbReference>
<dbReference type="RefSeq" id="NP_198760.1">
    <property type="nucleotide sequence ID" value="NM_123306.1"/>
</dbReference>
<dbReference type="SMR" id="Q9FLZ3"/>
<dbReference type="FunCoup" id="Q9FLZ3">
    <property type="interactions" value="2709"/>
</dbReference>
<dbReference type="STRING" id="3702.Q9FLZ3"/>
<dbReference type="iPTMnet" id="Q9FLZ3"/>
<dbReference type="PaxDb" id="3702-AT5G39440.1"/>
<dbReference type="EnsemblPlants" id="AT5G39440.1">
    <property type="protein sequence ID" value="AT5G39440.1"/>
    <property type="gene ID" value="AT5G39440"/>
</dbReference>
<dbReference type="GeneID" id="833940"/>
<dbReference type="Gramene" id="AT5G39440.1">
    <property type="protein sequence ID" value="AT5G39440.1"/>
    <property type="gene ID" value="AT5G39440"/>
</dbReference>
<dbReference type="KEGG" id="ath:AT5G39440"/>
<dbReference type="Araport" id="AT5G39440"/>
<dbReference type="TAIR" id="AT5G39440">
    <property type="gene designation" value="SNRK1.3"/>
</dbReference>
<dbReference type="eggNOG" id="KOG0583">
    <property type="taxonomic scope" value="Eukaryota"/>
</dbReference>
<dbReference type="HOGENOM" id="CLU_000288_59_3_1"/>
<dbReference type="InParanoid" id="Q9FLZ3"/>
<dbReference type="PhylomeDB" id="Q9FLZ3"/>
<dbReference type="PRO" id="PR:Q9FLZ3"/>
<dbReference type="Proteomes" id="UP000006548">
    <property type="component" value="Chromosome 5"/>
</dbReference>
<dbReference type="ExpressionAtlas" id="Q9FLZ3">
    <property type="expression patterns" value="baseline and differential"/>
</dbReference>
<dbReference type="GO" id="GO:0005524">
    <property type="term" value="F:ATP binding"/>
    <property type="evidence" value="ECO:0007669"/>
    <property type="project" value="UniProtKB-KW"/>
</dbReference>
<dbReference type="GO" id="GO:0106310">
    <property type="term" value="F:protein serine kinase activity"/>
    <property type="evidence" value="ECO:0007669"/>
    <property type="project" value="RHEA"/>
</dbReference>
<dbReference type="GO" id="GO:0004674">
    <property type="term" value="F:protein serine/threonine kinase activity"/>
    <property type="evidence" value="ECO:0007669"/>
    <property type="project" value="UniProtKB-KW"/>
</dbReference>
<dbReference type="CDD" id="cd12122">
    <property type="entry name" value="AMPKA_C"/>
    <property type="match status" value="1"/>
</dbReference>
<dbReference type="CDD" id="cd14079">
    <property type="entry name" value="STKc_AMPK_alpha"/>
    <property type="match status" value="1"/>
</dbReference>
<dbReference type="CDD" id="cd14335">
    <property type="entry name" value="UBA_SnRK1_plant"/>
    <property type="match status" value="1"/>
</dbReference>
<dbReference type="FunFam" id="1.10.510.10:FF:000592">
    <property type="entry name" value="CAMK family protein kinase"/>
    <property type="match status" value="1"/>
</dbReference>
<dbReference type="FunFam" id="3.30.200.20:FF:000003">
    <property type="entry name" value="Non-specific serine/threonine protein kinase"/>
    <property type="match status" value="1"/>
</dbReference>
<dbReference type="Gene3D" id="3.30.310.80">
    <property type="entry name" value="Kinase associated domain 1, KA1"/>
    <property type="match status" value="1"/>
</dbReference>
<dbReference type="Gene3D" id="1.10.510.10">
    <property type="entry name" value="Transferase(Phosphotransferase) domain 1"/>
    <property type="match status" value="1"/>
</dbReference>
<dbReference type="InterPro" id="IPR028375">
    <property type="entry name" value="KA1/Ssp2_C"/>
</dbReference>
<dbReference type="InterPro" id="IPR001772">
    <property type="entry name" value="KA1_dom"/>
</dbReference>
<dbReference type="InterPro" id="IPR011009">
    <property type="entry name" value="Kinase-like_dom_sf"/>
</dbReference>
<dbReference type="InterPro" id="IPR000719">
    <property type="entry name" value="Prot_kinase_dom"/>
</dbReference>
<dbReference type="InterPro" id="IPR017441">
    <property type="entry name" value="Protein_kinase_ATP_BS"/>
</dbReference>
<dbReference type="InterPro" id="IPR008271">
    <property type="entry name" value="Ser/Thr_kinase_AS"/>
</dbReference>
<dbReference type="InterPro" id="IPR015940">
    <property type="entry name" value="UBA"/>
</dbReference>
<dbReference type="PANTHER" id="PTHR24346:SF82">
    <property type="entry name" value="KP78A-RELATED"/>
    <property type="match status" value="1"/>
</dbReference>
<dbReference type="PANTHER" id="PTHR24346">
    <property type="entry name" value="MAP/MICROTUBULE AFFINITY-REGULATING KINASE"/>
    <property type="match status" value="1"/>
</dbReference>
<dbReference type="Pfam" id="PF02149">
    <property type="entry name" value="KA1"/>
    <property type="match status" value="1"/>
</dbReference>
<dbReference type="Pfam" id="PF00069">
    <property type="entry name" value="Pkinase"/>
    <property type="match status" value="1"/>
</dbReference>
<dbReference type="Pfam" id="PF00627">
    <property type="entry name" value="UBA"/>
    <property type="match status" value="1"/>
</dbReference>
<dbReference type="SMART" id="SM00220">
    <property type="entry name" value="S_TKc"/>
    <property type="match status" value="1"/>
</dbReference>
<dbReference type="SMART" id="SM00165">
    <property type="entry name" value="UBA"/>
    <property type="match status" value="1"/>
</dbReference>
<dbReference type="SUPFAM" id="SSF103243">
    <property type="entry name" value="KA1-like"/>
    <property type="match status" value="1"/>
</dbReference>
<dbReference type="SUPFAM" id="SSF56112">
    <property type="entry name" value="Protein kinase-like (PK-like)"/>
    <property type="match status" value="1"/>
</dbReference>
<dbReference type="PROSITE" id="PS50032">
    <property type="entry name" value="KA1"/>
    <property type="match status" value="1"/>
</dbReference>
<dbReference type="PROSITE" id="PS00107">
    <property type="entry name" value="PROTEIN_KINASE_ATP"/>
    <property type="match status" value="1"/>
</dbReference>
<dbReference type="PROSITE" id="PS50011">
    <property type="entry name" value="PROTEIN_KINASE_DOM"/>
    <property type="match status" value="1"/>
</dbReference>
<dbReference type="PROSITE" id="PS00108">
    <property type="entry name" value="PROTEIN_KINASE_ST"/>
    <property type="match status" value="1"/>
</dbReference>
<dbReference type="PROSITE" id="PS50030">
    <property type="entry name" value="UBA"/>
    <property type="match status" value="1"/>
</dbReference>
<protein>
    <recommendedName>
        <fullName evidence="9">SNF1-related protein kinase catalytic subunit alpha KIN12</fullName>
        <shortName evidence="6">AKIN12</shortName>
        <ecNumber evidence="9">2.7.11.1</ecNumber>
    </recommendedName>
    <alternativeName>
        <fullName evidence="9">AKIN alpha-3</fullName>
        <shortName evidence="9">AKINalpha3</shortName>
    </alternativeName>
    <alternativeName>
        <fullName evidence="7">SNF1-related kinase 1.3</fullName>
        <shortName evidence="7">SnRK1.3</shortName>
    </alternativeName>
</protein>
<sequence>MDGSSEKTTNKLVSILPNYRIGKTLGHGSFAKVKLALHVATGHKVAIKILNRSKIKNMGIEIKVQREIKILRFLMHPHIIRQYEVIETPNDIYVVMEYVKSGELFDYIVEKGKLQEDEARHLFQQIISGVEYCHRNMIVHRDLKPENVLLDSQCNIKIVDFGLSNVMHDGHFLKTSCGSPNYAAPEVISGKPYGPDVDIWSCGVILYALLCGTLPFDDENIPNVFEKIKRGMYTLPNHLSHFARDLIPRMLMVDPTMRISITEIRQHPWFNNHLPLYLSIPPLDTIDQAKKIEEEIIQNVVNIGFDRNHVVDSLANRIQNEATVAYHLILDNRNQNSVPNDPFQSKFKEISDGIFNSTLPVQNITSHVGHSFSALYGLKSNVKDDKTWTLGLQSQGSPYDIMTEIFKALQNLKICWKKIGLYNIKCRWVRSFAYYKNHTIEDECAIILPTVIKFEIQLYKVREGKYLLDILRIDGPQFIFFDLCVAFLRELGVL</sequence>
<name>KIN12_ARATH</name>
<organism>
    <name type="scientific">Arabidopsis thaliana</name>
    <name type="common">Mouse-ear cress</name>
    <dbReference type="NCBI Taxonomy" id="3702"/>
    <lineage>
        <taxon>Eukaryota</taxon>
        <taxon>Viridiplantae</taxon>
        <taxon>Streptophyta</taxon>
        <taxon>Embryophyta</taxon>
        <taxon>Tracheophyta</taxon>
        <taxon>Spermatophyta</taxon>
        <taxon>Magnoliopsida</taxon>
        <taxon>eudicotyledons</taxon>
        <taxon>Gunneridae</taxon>
        <taxon>Pentapetalae</taxon>
        <taxon>rosids</taxon>
        <taxon>malvids</taxon>
        <taxon>Brassicales</taxon>
        <taxon>Brassicaceae</taxon>
        <taxon>Camelineae</taxon>
        <taxon>Arabidopsis</taxon>
    </lineage>
</organism>
<evidence type="ECO:0000250" key="1">
    <source>
        <dbReference type="UniProtKB" id="Q38997"/>
    </source>
</evidence>
<evidence type="ECO:0000255" key="2">
    <source>
        <dbReference type="PROSITE-ProRule" id="PRU00159"/>
    </source>
</evidence>
<evidence type="ECO:0000255" key="3">
    <source>
        <dbReference type="PROSITE-ProRule" id="PRU00212"/>
    </source>
</evidence>
<evidence type="ECO:0000255" key="4">
    <source>
        <dbReference type="PROSITE-ProRule" id="PRU00565"/>
    </source>
</evidence>
<evidence type="ECO:0000269" key="5">
    <source>
    </source>
</evidence>
<evidence type="ECO:0000303" key="6">
    <source>
    </source>
</evidence>
<evidence type="ECO:0000303" key="7">
    <source>
    </source>
</evidence>
<evidence type="ECO:0000303" key="8">
    <source>
    </source>
</evidence>
<evidence type="ECO:0000305" key="9"/>
<evidence type="ECO:0000312" key="10">
    <source>
        <dbReference type="Araport" id="AT5G39440"/>
    </source>
</evidence>
<evidence type="ECO:0000312" key="11">
    <source>
        <dbReference type="EMBL" id="BAB11017.1"/>
    </source>
</evidence>
<feature type="chain" id="PRO_0000445491" description="SNF1-related protein kinase catalytic subunit alpha KIN12">
    <location>
        <begin position="1"/>
        <end position="494"/>
    </location>
</feature>
<feature type="domain" description="Protein kinase" evidence="2">
    <location>
        <begin position="19"/>
        <end position="270"/>
    </location>
</feature>
<feature type="domain" description="UBA" evidence="3">
    <location>
        <begin position="291"/>
        <end position="331"/>
    </location>
</feature>
<feature type="domain" description="KA1" evidence="4">
    <location>
        <begin position="445"/>
        <end position="493"/>
    </location>
</feature>
<feature type="region of interest" description="Auto-inhibitory domain (AID)" evidence="1">
    <location>
        <begin position="289"/>
        <end position="386"/>
    </location>
</feature>
<feature type="region of interest" description="Regulatory domain (RD)" evidence="1">
    <location>
        <begin position="293"/>
        <end position="494"/>
    </location>
</feature>
<feature type="region of interest" description="PPI" evidence="1">
    <location>
        <begin position="387"/>
        <end position="494"/>
    </location>
</feature>
<feature type="active site" description="Proton acceptor" evidence="2">
    <location>
        <position position="142"/>
    </location>
</feature>
<feature type="binding site" evidence="2">
    <location>
        <begin position="25"/>
        <end position="33"/>
    </location>
    <ligand>
        <name>ATP</name>
        <dbReference type="ChEBI" id="CHEBI:30616"/>
    </ligand>
</feature>
<feature type="binding site" evidence="2">
    <location>
        <position position="48"/>
    </location>
    <ligand>
        <name>ATP</name>
        <dbReference type="ChEBI" id="CHEBI:30616"/>
    </ligand>
</feature>
<feature type="modified residue" description="Phosphothreonine" evidence="1">
    <location>
        <position position="175"/>
    </location>
</feature>